<keyword id="KW-0274">FAD</keyword>
<keyword id="KW-0285">Flavoprotein</keyword>
<keyword id="KW-0472">Membrane</keyword>
<keyword id="KW-0496">Mitochondrion</keyword>
<keyword id="KW-0560">Oxidoreductase</keyword>
<keyword id="KW-1185">Reference proteome</keyword>
<sequence length="526" mass="58900">MSLRNSTTAKRFHSHKTWAGTFWSRPSLYFQPASIEELQAIVTRARDLGKTIMVVGSAHSPSDLTMTSQWLVNLDKLSKAVSFKPHTSGLYTDVTVEAGIRIHQLNEVLKRKGLAMQNLGSISDQSVAGIISTGTHGSSAYHGLVSQQIVSLTIMIASGELLTCSPDENPTLFRAALLSLGKLGIIVYATLRTVPAYTIHSTQHVITFETLIREWDNLWTASEYIRVWWFPYAERCILWRASKSELPLSAPRPSWYGTWLGRLFYETLLWVSVRLWPSLTPSVERFIFSRQYGMEDTLGSGTGSEAVQGSVEGLNMDCLFSQFVNEWGMPLDNGPDVLRALRAKIEAAAKDNIYYVHSPVEVRCSNMSVPDSGDRNVEPNTQEFSASRRGAITGNTLRPLLDINPRDRPYASPHGHVTNSNLTLYINATMYRPFGVNSPVGKWYRDFEGIVAEAGGKPHWAKNFLGPETAELKDNESEDGKMLGLKPIIDEWYGDDLKQWKSLREKYDPTGVFLSGKVWMDRNGLL</sequence>
<dbReference type="EC" id="1.1.3.37"/>
<dbReference type="EMBL" id="CR382127">
    <property type="protein sequence ID" value="CAG84262.1"/>
    <property type="molecule type" value="Genomic_DNA"/>
</dbReference>
<dbReference type="RefSeq" id="XP_500324.1">
    <property type="nucleotide sequence ID" value="XM_500324.1"/>
</dbReference>
<dbReference type="SMR" id="Q6CG88"/>
<dbReference type="FunCoup" id="Q6CG88">
    <property type="interactions" value="73"/>
</dbReference>
<dbReference type="STRING" id="284591.Q6CG88"/>
<dbReference type="EnsemblFungi" id="CAG84262">
    <property type="protein sequence ID" value="CAG84262"/>
    <property type="gene ID" value="YALI0_A21263g"/>
</dbReference>
<dbReference type="KEGG" id="yli:2906352"/>
<dbReference type="VEuPathDB" id="FungiDB:YALI0_A21263g"/>
<dbReference type="HOGENOM" id="CLU_003896_4_1_1"/>
<dbReference type="InParanoid" id="Q6CG88"/>
<dbReference type="OMA" id="YPRFGEF"/>
<dbReference type="OrthoDB" id="104514at4891"/>
<dbReference type="UniPathway" id="UPA00771">
    <property type="reaction ID" value="UER00766"/>
</dbReference>
<dbReference type="Proteomes" id="UP000001300">
    <property type="component" value="Chromosome A"/>
</dbReference>
<dbReference type="GO" id="GO:0032473">
    <property type="term" value="C:cytoplasmic side of mitochondrial outer membrane"/>
    <property type="evidence" value="ECO:0007669"/>
    <property type="project" value="EnsemblFungi"/>
</dbReference>
<dbReference type="GO" id="GO:0005739">
    <property type="term" value="C:mitochondrion"/>
    <property type="evidence" value="ECO:0000318"/>
    <property type="project" value="GO_Central"/>
</dbReference>
<dbReference type="GO" id="GO:0003885">
    <property type="term" value="F:D-arabinono-1,4-lactone oxidase activity"/>
    <property type="evidence" value="ECO:0000318"/>
    <property type="project" value="GO_Central"/>
</dbReference>
<dbReference type="GO" id="GO:0071949">
    <property type="term" value="F:FAD binding"/>
    <property type="evidence" value="ECO:0007669"/>
    <property type="project" value="InterPro"/>
</dbReference>
<dbReference type="GO" id="GO:0031489">
    <property type="term" value="F:myosin V binding"/>
    <property type="evidence" value="ECO:0007669"/>
    <property type="project" value="EnsemblFungi"/>
</dbReference>
<dbReference type="GO" id="GO:0034599">
    <property type="term" value="P:cellular response to oxidative stress"/>
    <property type="evidence" value="ECO:0007669"/>
    <property type="project" value="EnsemblFungi"/>
</dbReference>
<dbReference type="GO" id="GO:0070485">
    <property type="term" value="P:dehydro-D-arabinono-1,4-lactone biosynthetic process"/>
    <property type="evidence" value="ECO:0007669"/>
    <property type="project" value="EnsemblFungi"/>
</dbReference>
<dbReference type="GO" id="GO:0000001">
    <property type="term" value="P:mitochondrion inheritance"/>
    <property type="evidence" value="ECO:0007669"/>
    <property type="project" value="EnsemblFungi"/>
</dbReference>
<dbReference type="Gene3D" id="3.30.465.10">
    <property type="match status" value="1"/>
</dbReference>
<dbReference type="Gene3D" id="3.30.43.10">
    <property type="entry name" value="Uridine Diphospho-n-acetylenolpyruvylglucosamine Reductase, domain 2"/>
    <property type="match status" value="1"/>
</dbReference>
<dbReference type="InterPro" id="IPR007173">
    <property type="entry name" value="ALO_C"/>
</dbReference>
<dbReference type="InterPro" id="IPR016166">
    <property type="entry name" value="FAD-bd_PCMH"/>
</dbReference>
<dbReference type="InterPro" id="IPR036318">
    <property type="entry name" value="FAD-bd_PCMH-like_sf"/>
</dbReference>
<dbReference type="InterPro" id="IPR016167">
    <property type="entry name" value="FAD-bd_PCMH_sub1"/>
</dbReference>
<dbReference type="InterPro" id="IPR016169">
    <property type="entry name" value="FAD-bd_PCMH_sub2"/>
</dbReference>
<dbReference type="InterPro" id="IPR010031">
    <property type="entry name" value="FAD_lactone_oxidase-like"/>
</dbReference>
<dbReference type="InterPro" id="IPR006094">
    <property type="entry name" value="Oxid_FAD_bind_N"/>
</dbReference>
<dbReference type="InterPro" id="IPR030654">
    <property type="entry name" value="Sugar_lactone_oxidase"/>
</dbReference>
<dbReference type="NCBIfam" id="TIGR01678">
    <property type="entry name" value="FAD_lactone_ox"/>
    <property type="match status" value="1"/>
</dbReference>
<dbReference type="PANTHER" id="PTHR43762:SF1">
    <property type="entry name" value="D-ARABINONO-1,4-LACTONE OXIDASE"/>
    <property type="match status" value="1"/>
</dbReference>
<dbReference type="PANTHER" id="PTHR43762">
    <property type="entry name" value="L-GULONOLACTONE OXIDASE"/>
    <property type="match status" value="1"/>
</dbReference>
<dbReference type="Pfam" id="PF04030">
    <property type="entry name" value="ALO"/>
    <property type="match status" value="1"/>
</dbReference>
<dbReference type="Pfam" id="PF01565">
    <property type="entry name" value="FAD_binding_4"/>
    <property type="match status" value="1"/>
</dbReference>
<dbReference type="PIRSF" id="PIRSF000136">
    <property type="entry name" value="LGO_GLO"/>
    <property type="match status" value="1"/>
</dbReference>
<dbReference type="SUPFAM" id="SSF56176">
    <property type="entry name" value="FAD-binding/transporter-associated domain-like"/>
    <property type="match status" value="1"/>
</dbReference>
<dbReference type="PROSITE" id="PS51387">
    <property type="entry name" value="FAD_PCMH"/>
    <property type="match status" value="1"/>
</dbReference>
<organism>
    <name type="scientific">Yarrowia lipolytica (strain CLIB 122 / E 150)</name>
    <name type="common">Yeast</name>
    <name type="synonym">Candida lipolytica</name>
    <dbReference type="NCBI Taxonomy" id="284591"/>
    <lineage>
        <taxon>Eukaryota</taxon>
        <taxon>Fungi</taxon>
        <taxon>Dikarya</taxon>
        <taxon>Ascomycota</taxon>
        <taxon>Saccharomycotina</taxon>
        <taxon>Dipodascomycetes</taxon>
        <taxon>Dipodascales</taxon>
        <taxon>Dipodascales incertae sedis</taxon>
        <taxon>Yarrowia</taxon>
    </lineage>
</organism>
<protein>
    <recommendedName>
        <fullName>D-arabinono-1,4-lactone oxidase</fullName>
        <shortName>ALO</shortName>
        <ecNumber>1.1.3.37</ecNumber>
    </recommendedName>
    <alternativeName>
        <fullName>L-galactono-gamma-lactone oxidase</fullName>
    </alternativeName>
</protein>
<reference key="1">
    <citation type="journal article" date="2004" name="Nature">
        <title>Genome evolution in yeasts.</title>
        <authorList>
            <person name="Dujon B."/>
            <person name="Sherman D."/>
            <person name="Fischer G."/>
            <person name="Durrens P."/>
            <person name="Casaregola S."/>
            <person name="Lafontaine I."/>
            <person name="de Montigny J."/>
            <person name="Marck C."/>
            <person name="Neuveglise C."/>
            <person name="Talla E."/>
            <person name="Goffard N."/>
            <person name="Frangeul L."/>
            <person name="Aigle M."/>
            <person name="Anthouard V."/>
            <person name="Babour A."/>
            <person name="Barbe V."/>
            <person name="Barnay S."/>
            <person name="Blanchin S."/>
            <person name="Beckerich J.-M."/>
            <person name="Beyne E."/>
            <person name="Bleykasten C."/>
            <person name="Boisrame A."/>
            <person name="Boyer J."/>
            <person name="Cattolico L."/>
            <person name="Confanioleri F."/>
            <person name="de Daruvar A."/>
            <person name="Despons L."/>
            <person name="Fabre E."/>
            <person name="Fairhead C."/>
            <person name="Ferry-Dumazet H."/>
            <person name="Groppi A."/>
            <person name="Hantraye F."/>
            <person name="Hennequin C."/>
            <person name="Jauniaux N."/>
            <person name="Joyet P."/>
            <person name="Kachouri R."/>
            <person name="Kerrest A."/>
            <person name="Koszul R."/>
            <person name="Lemaire M."/>
            <person name="Lesur I."/>
            <person name="Ma L."/>
            <person name="Muller H."/>
            <person name="Nicaud J.-M."/>
            <person name="Nikolski M."/>
            <person name="Oztas S."/>
            <person name="Ozier-Kalogeropoulos O."/>
            <person name="Pellenz S."/>
            <person name="Potier S."/>
            <person name="Richard G.-F."/>
            <person name="Straub M.-L."/>
            <person name="Suleau A."/>
            <person name="Swennen D."/>
            <person name="Tekaia F."/>
            <person name="Wesolowski-Louvel M."/>
            <person name="Westhof E."/>
            <person name="Wirth B."/>
            <person name="Zeniou-Meyer M."/>
            <person name="Zivanovic Y."/>
            <person name="Bolotin-Fukuhara M."/>
            <person name="Thierry A."/>
            <person name="Bouchier C."/>
            <person name="Caudron B."/>
            <person name="Scarpelli C."/>
            <person name="Gaillardin C."/>
            <person name="Weissenbach J."/>
            <person name="Wincker P."/>
            <person name="Souciet J.-L."/>
        </authorList>
    </citation>
    <scope>NUCLEOTIDE SEQUENCE [LARGE SCALE GENOMIC DNA]</scope>
    <source>
        <strain>CLIB 122 / E 150</strain>
    </source>
</reference>
<feature type="chain" id="PRO_0000128170" description="D-arabinono-1,4-lactone oxidase">
    <location>
        <begin position="1"/>
        <end position="526"/>
    </location>
</feature>
<feature type="domain" description="FAD-binding PCMH-type" evidence="2">
    <location>
        <begin position="22"/>
        <end position="196"/>
    </location>
</feature>
<feature type="modified residue" description="Pros-8alpha-FAD histidine" evidence="1">
    <location>
        <position position="59"/>
    </location>
</feature>
<comment type="catalytic activity">
    <reaction>
        <text>D-arabinono-1,4-lactone + O2 = dehydro-D-arabinono-1,4-lactone + H2O2 + H(+)</text>
        <dbReference type="Rhea" id="RHEA:23756"/>
        <dbReference type="ChEBI" id="CHEBI:15378"/>
        <dbReference type="ChEBI" id="CHEBI:15379"/>
        <dbReference type="ChEBI" id="CHEBI:16240"/>
        <dbReference type="ChEBI" id="CHEBI:16292"/>
        <dbReference type="ChEBI" id="CHEBI:58277"/>
        <dbReference type="EC" id="1.1.3.37"/>
    </reaction>
</comment>
<comment type="cofactor">
    <cofactor evidence="1">
        <name>FAD</name>
        <dbReference type="ChEBI" id="CHEBI:57692"/>
    </cofactor>
</comment>
<comment type="pathway">
    <text>Cofactor biosynthesis; D-erythroascorbate biosynthesis; dehydro-D-arabinono-1,4-lactone from D-arabinose: step 2/2.</text>
</comment>
<comment type="subcellular location">
    <subcellularLocation>
        <location evidence="1">Mitochondrion membrane</location>
    </subcellularLocation>
    <text evidence="1">Membrane-embedded.</text>
</comment>
<comment type="similarity">
    <text evidence="3">Belongs to the oxygen-dependent FAD-linked oxidoreductase family.</text>
</comment>
<gene>
    <name type="primary">ALO1</name>
    <name type="ordered locus">YALI0A21263g</name>
</gene>
<evidence type="ECO:0000250" key="1"/>
<evidence type="ECO:0000255" key="2">
    <source>
        <dbReference type="PROSITE-ProRule" id="PRU00718"/>
    </source>
</evidence>
<evidence type="ECO:0000305" key="3"/>
<proteinExistence type="inferred from homology"/>
<name>ALO_YARLI</name>
<accession>Q6CG88</accession>